<accession>A1VIP8</accession>
<dbReference type="EC" id="3.6.5.3" evidence="2"/>
<dbReference type="EMBL" id="CP000529">
    <property type="protein sequence ID" value="ABM35526.1"/>
    <property type="molecule type" value="Genomic_DNA"/>
</dbReference>
<dbReference type="EMBL" id="CP000529">
    <property type="protein sequence ID" value="ABM38943.1"/>
    <property type="molecule type" value="Genomic_DNA"/>
</dbReference>
<dbReference type="SMR" id="A1VIP8"/>
<dbReference type="STRING" id="365044.Pnap_0201"/>
<dbReference type="KEGG" id="pna:Pnap_0201"/>
<dbReference type="KEGG" id="pna:Pnap_3647"/>
<dbReference type="eggNOG" id="COG0050">
    <property type="taxonomic scope" value="Bacteria"/>
</dbReference>
<dbReference type="HOGENOM" id="CLU_007265_0_0_4"/>
<dbReference type="OrthoDB" id="9803139at2"/>
<dbReference type="Proteomes" id="UP000000644">
    <property type="component" value="Chromosome"/>
</dbReference>
<dbReference type="GO" id="GO:0005829">
    <property type="term" value="C:cytosol"/>
    <property type="evidence" value="ECO:0007669"/>
    <property type="project" value="TreeGrafter"/>
</dbReference>
<dbReference type="GO" id="GO:0005525">
    <property type="term" value="F:GTP binding"/>
    <property type="evidence" value="ECO:0007669"/>
    <property type="project" value="UniProtKB-UniRule"/>
</dbReference>
<dbReference type="GO" id="GO:0003924">
    <property type="term" value="F:GTPase activity"/>
    <property type="evidence" value="ECO:0007669"/>
    <property type="project" value="InterPro"/>
</dbReference>
<dbReference type="GO" id="GO:0097216">
    <property type="term" value="F:guanosine tetraphosphate binding"/>
    <property type="evidence" value="ECO:0007669"/>
    <property type="project" value="UniProtKB-ARBA"/>
</dbReference>
<dbReference type="GO" id="GO:0003746">
    <property type="term" value="F:translation elongation factor activity"/>
    <property type="evidence" value="ECO:0007669"/>
    <property type="project" value="UniProtKB-UniRule"/>
</dbReference>
<dbReference type="CDD" id="cd01884">
    <property type="entry name" value="EF_Tu"/>
    <property type="match status" value="1"/>
</dbReference>
<dbReference type="CDD" id="cd03697">
    <property type="entry name" value="EFTU_II"/>
    <property type="match status" value="1"/>
</dbReference>
<dbReference type="CDD" id="cd03707">
    <property type="entry name" value="EFTU_III"/>
    <property type="match status" value="1"/>
</dbReference>
<dbReference type="FunFam" id="2.40.30.10:FF:000001">
    <property type="entry name" value="Elongation factor Tu"/>
    <property type="match status" value="1"/>
</dbReference>
<dbReference type="FunFam" id="3.40.50.300:FF:000003">
    <property type="entry name" value="Elongation factor Tu"/>
    <property type="match status" value="1"/>
</dbReference>
<dbReference type="Gene3D" id="3.40.50.300">
    <property type="entry name" value="P-loop containing nucleotide triphosphate hydrolases"/>
    <property type="match status" value="1"/>
</dbReference>
<dbReference type="Gene3D" id="2.40.30.10">
    <property type="entry name" value="Translation factors"/>
    <property type="match status" value="2"/>
</dbReference>
<dbReference type="HAMAP" id="MF_00118_B">
    <property type="entry name" value="EF_Tu_B"/>
    <property type="match status" value="1"/>
</dbReference>
<dbReference type="InterPro" id="IPR041709">
    <property type="entry name" value="EF-Tu_GTP-bd"/>
</dbReference>
<dbReference type="InterPro" id="IPR050055">
    <property type="entry name" value="EF-Tu_GTPase"/>
</dbReference>
<dbReference type="InterPro" id="IPR004161">
    <property type="entry name" value="EFTu-like_2"/>
</dbReference>
<dbReference type="InterPro" id="IPR033720">
    <property type="entry name" value="EFTU_2"/>
</dbReference>
<dbReference type="InterPro" id="IPR031157">
    <property type="entry name" value="G_TR_CS"/>
</dbReference>
<dbReference type="InterPro" id="IPR027417">
    <property type="entry name" value="P-loop_NTPase"/>
</dbReference>
<dbReference type="InterPro" id="IPR005225">
    <property type="entry name" value="Small_GTP-bd"/>
</dbReference>
<dbReference type="InterPro" id="IPR000795">
    <property type="entry name" value="T_Tr_GTP-bd_dom"/>
</dbReference>
<dbReference type="InterPro" id="IPR009000">
    <property type="entry name" value="Transl_B-barrel_sf"/>
</dbReference>
<dbReference type="InterPro" id="IPR009001">
    <property type="entry name" value="Transl_elong_EF1A/Init_IF2_C"/>
</dbReference>
<dbReference type="InterPro" id="IPR004541">
    <property type="entry name" value="Transl_elong_EFTu/EF1A_bac/org"/>
</dbReference>
<dbReference type="InterPro" id="IPR004160">
    <property type="entry name" value="Transl_elong_EFTu/EF1A_C"/>
</dbReference>
<dbReference type="NCBIfam" id="TIGR00485">
    <property type="entry name" value="EF-Tu"/>
    <property type="match status" value="1"/>
</dbReference>
<dbReference type="NCBIfam" id="NF000766">
    <property type="entry name" value="PRK00049.1"/>
    <property type="match status" value="1"/>
</dbReference>
<dbReference type="NCBIfam" id="NF009372">
    <property type="entry name" value="PRK12735.1"/>
    <property type="match status" value="1"/>
</dbReference>
<dbReference type="NCBIfam" id="NF009373">
    <property type="entry name" value="PRK12736.1"/>
    <property type="match status" value="1"/>
</dbReference>
<dbReference type="NCBIfam" id="TIGR00231">
    <property type="entry name" value="small_GTP"/>
    <property type="match status" value="1"/>
</dbReference>
<dbReference type="PANTHER" id="PTHR43721:SF22">
    <property type="entry name" value="ELONGATION FACTOR TU, MITOCHONDRIAL"/>
    <property type="match status" value="1"/>
</dbReference>
<dbReference type="PANTHER" id="PTHR43721">
    <property type="entry name" value="ELONGATION FACTOR TU-RELATED"/>
    <property type="match status" value="1"/>
</dbReference>
<dbReference type="Pfam" id="PF00009">
    <property type="entry name" value="GTP_EFTU"/>
    <property type="match status" value="1"/>
</dbReference>
<dbReference type="Pfam" id="PF03144">
    <property type="entry name" value="GTP_EFTU_D2"/>
    <property type="match status" value="1"/>
</dbReference>
<dbReference type="Pfam" id="PF03143">
    <property type="entry name" value="GTP_EFTU_D3"/>
    <property type="match status" value="1"/>
</dbReference>
<dbReference type="PRINTS" id="PR00315">
    <property type="entry name" value="ELONGATNFCT"/>
</dbReference>
<dbReference type="SUPFAM" id="SSF50465">
    <property type="entry name" value="EF-Tu/eEF-1alpha/eIF2-gamma C-terminal domain"/>
    <property type="match status" value="1"/>
</dbReference>
<dbReference type="SUPFAM" id="SSF52540">
    <property type="entry name" value="P-loop containing nucleoside triphosphate hydrolases"/>
    <property type="match status" value="1"/>
</dbReference>
<dbReference type="SUPFAM" id="SSF50447">
    <property type="entry name" value="Translation proteins"/>
    <property type="match status" value="1"/>
</dbReference>
<dbReference type="PROSITE" id="PS00301">
    <property type="entry name" value="G_TR_1"/>
    <property type="match status" value="1"/>
</dbReference>
<dbReference type="PROSITE" id="PS51722">
    <property type="entry name" value="G_TR_2"/>
    <property type="match status" value="1"/>
</dbReference>
<sequence length="396" mass="42946">MAKEKFSRTKPHVNVGTIGHVDHGKTTLTAAIATVLAAKFGGEAKAYDQIDAAPEEKARGITINTAHVEYETAARHYAHVDCPGHADYVKNMITGAAQMDGAILVCSAADGPMPQTREHILLARQVGVPYIIVFLNKCDMVDDAELLELVEMEVRELLDKYDFPGDDTPIIHGSAKLALEGDKGPLGEEAIMKLADALDNYIPLPERAVDGAFLMPVEDVFSISGRGTVVTGRIERGIIKVGEEIEIVGIADTQKTICTGVEMFRKLLDQGQAGDNVGILLRGTKREDVQRGQVLCKPGSIKPHTHFTGEIYVLSKDEGGRHTPFFNNYRPQFYFRTTDVTGAIELPEGKEMVMPGDNVSITVKLINPIAMEEGLRFAIREGGRTVGAGVVAKILA</sequence>
<evidence type="ECO:0000250" key="1"/>
<evidence type="ECO:0000255" key="2">
    <source>
        <dbReference type="HAMAP-Rule" id="MF_00118"/>
    </source>
</evidence>
<organism>
    <name type="scientific">Polaromonas naphthalenivorans (strain CJ2)</name>
    <dbReference type="NCBI Taxonomy" id="365044"/>
    <lineage>
        <taxon>Bacteria</taxon>
        <taxon>Pseudomonadati</taxon>
        <taxon>Pseudomonadota</taxon>
        <taxon>Betaproteobacteria</taxon>
        <taxon>Burkholderiales</taxon>
        <taxon>Comamonadaceae</taxon>
        <taxon>Polaromonas</taxon>
    </lineage>
</organism>
<protein>
    <recommendedName>
        <fullName evidence="2">Elongation factor Tu</fullName>
        <shortName evidence="2">EF-Tu</shortName>
        <ecNumber evidence="2">3.6.5.3</ecNumber>
    </recommendedName>
</protein>
<proteinExistence type="inferred from homology"/>
<feature type="chain" id="PRO_0000337464" description="Elongation factor Tu">
    <location>
        <begin position="1"/>
        <end position="396"/>
    </location>
</feature>
<feature type="domain" description="tr-type G">
    <location>
        <begin position="10"/>
        <end position="206"/>
    </location>
</feature>
<feature type="region of interest" description="G1" evidence="1">
    <location>
        <begin position="19"/>
        <end position="26"/>
    </location>
</feature>
<feature type="region of interest" description="G2" evidence="1">
    <location>
        <begin position="60"/>
        <end position="64"/>
    </location>
</feature>
<feature type="region of interest" description="G3" evidence="1">
    <location>
        <begin position="81"/>
        <end position="84"/>
    </location>
</feature>
<feature type="region of interest" description="G4" evidence="1">
    <location>
        <begin position="136"/>
        <end position="139"/>
    </location>
</feature>
<feature type="region of interest" description="G5" evidence="1">
    <location>
        <begin position="174"/>
        <end position="176"/>
    </location>
</feature>
<feature type="binding site" evidence="2">
    <location>
        <begin position="19"/>
        <end position="26"/>
    </location>
    <ligand>
        <name>GTP</name>
        <dbReference type="ChEBI" id="CHEBI:37565"/>
    </ligand>
</feature>
<feature type="binding site" evidence="2">
    <location>
        <position position="26"/>
    </location>
    <ligand>
        <name>Mg(2+)</name>
        <dbReference type="ChEBI" id="CHEBI:18420"/>
    </ligand>
</feature>
<feature type="binding site" evidence="2">
    <location>
        <begin position="81"/>
        <end position="85"/>
    </location>
    <ligand>
        <name>GTP</name>
        <dbReference type="ChEBI" id="CHEBI:37565"/>
    </ligand>
</feature>
<feature type="binding site" evidence="2">
    <location>
        <begin position="136"/>
        <end position="139"/>
    </location>
    <ligand>
        <name>GTP</name>
        <dbReference type="ChEBI" id="CHEBI:37565"/>
    </ligand>
</feature>
<reference key="1">
    <citation type="journal article" date="2009" name="Environ. Microbiol.">
        <title>The genome of Polaromonas naphthalenivorans strain CJ2, isolated from coal tar-contaminated sediment, reveals physiological and metabolic versatility and evolution through extensive horizontal gene transfer.</title>
        <authorList>
            <person name="Yagi J.M."/>
            <person name="Sims D."/>
            <person name="Brettin T."/>
            <person name="Bruce D."/>
            <person name="Madsen E.L."/>
        </authorList>
    </citation>
    <scope>NUCLEOTIDE SEQUENCE [LARGE SCALE GENOMIC DNA]</scope>
    <source>
        <strain>CJ2</strain>
    </source>
</reference>
<comment type="function">
    <text evidence="2">GTP hydrolase that promotes the GTP-dependent binding of aminoacyl-tRNA to the A-site of ribosomes during protein biosynthesis.</text>
</comment>
<comment type="catalytic activity">
    <reaction evidence="2">
        <text>GTP + H2O = GDP + phosphate + H(+)</text>
        <dbReference type="Rhea" id="RHEA:19669"/>
        <dbReference type="ChEBI" id="CHEBI:15377"/>
        <dbReference type="ChEBI" id="CHEBI:15378"/>
        <dbReference type="ChEBI" id="CHEBI:37565"/>
        <dbReference type="ChEBI" id="CHEBI:43474"/>
        <dbReference type="ChEBI" id="CHEBI:58189"/>
        <dbReference type="EC" id="3.6.5.3"/>
    </reaction>
    <physiologicalReaction direction="left-to-right" evidence="2">
        <dbReference type="Rhea" id="RHEA:19670"/>
    </physiologicalReaction>
</comment>
<comment type="subunit">
    <text evidence="2">Monomer.</text>
</comment>
<comment type="subcellular location">
    <subcellularLocation>
        <location evidence="2">Cytoplasm</location>
    </subcellularLocation>
</comment>
<comment type="similarity">
    <text evidence="2">Belongs to the TRAFAC class translation factor GTPase superfamily. Classic translation factor GTPase family. EF-Tu/EF-1A subfamily.</text>
</comment>
<name>EFTU_POLNA</name>
<gene>
    <name evidence="2" type="primary">tuf1</name>
    <name type="ordered locus">Pnap_0201</name>
</gene>
<gene>
    <name evidence="2" type="primary">tuf2</name>
    <name type="ordered locus">Pnap_3647</name>
</gene>
<keyword id="KW-0963">Cytoplasm</keyword>
<keyword id="KW-0251">Elongation factor</keyword>
<keyword id="KW-0342">GTP-binding</keyword>
<keyword id="KW-0378">Hydrolase</keyword>
<keyword id="KW-0460">Magnesium</keyword>
<keyword id="KW-0479">Metal-binding</keyword>
<keyword id="KW-0547">Nucleotide-binding</keyword>
<keyword id="KW-0648">Protein biosynthesis</keyword>
<keyword id="KW-1185">Reference proteome</keyword>